<organism>
    <name type="scientific">Homo sapiens</name>
    <name type="common">Human</name>
    <dbReference type="NCBI Taxonomy" id="9606"/>
    <lineage>
        <taxon>Eukaryota</taxon>
        <taxon>Metazoa</taxon>
        <taxon>Chordata</taxon>
        <taxon>Craniata</taxon>
        <taxon>Vertebrata</taxon>
        <taxon>Euteleostomi</taxon>
        <taxon>Mammalia</taxon>
        <taxon>Eutheria</taxon>
        <taxon>Euarchontoglires</taxon>
        <taxon>Primates</taxon>
        <taxon>Haplorrhini</taxon>
        <taxon>Catarrhini</taxon>
        <taxon>Hominidae</taxon>
        <taxon>Homo</taxon>
    </lineage>
</organism>
<gene>
    <name type="primary">CLDN22</name>
</gene>
<dbReference type="EMBL" id="AC093844">
    <property type="status" value="NOT_ANNOTATED_CDS"/>
    <property type="molecule type" value="Genomic_DNA"/>
</dbReference>
<dbReference type="EMBL" id="AK098064">
    <property type="status" value="NOT_ANNOTATED_CDS"/>
    <property type="molecule type" value="mRNA"/>
</dbReference>
<dbReference type="CCDS" id="CCDS43286.1"/>
<dbReference type="RefSeq" id="NP_001104789.1">
    <property type="nucleotide sequence ID" value="NM_001111319.3"/>
</dbReference>
<dbReference type="SMR" id="Q8N7P3"/>
<dbReference type="BioGRID" id="119811">
    <property type="interactions" value="7"/>
</dbReference>
<dbReference type="FunCoup" id="Q8N7P3">
    <property type="interactions" value="360"/>
</dbReference>
<dbReference type="IntAct" id="Q8N7P3">
    <property type="interactions" value="7"/>
</dbReference>
<dbReference type="STRING" id="9606.ENSP00000318113"/>
<dbReference type="TCDB" id="1.H.1.1.3">
    <property type="family name" value="the claudin tight junction (claudin1) family"/>
</dbReference>
<dbReference type="BioMuta" id="CLDN22"/>
<dbReference type="DMDM" id="62298548"/>
<dbReference type="PaxDb" id="9606-ENSP00000318113"/>
<dbReference type="Antibodypedia" id="55709">
    <property type="antibodies" value="69 antibodies from 18 providers"/>
</dbReference>
<dbReference type="DNASU" id="53842"/>
<dbReference type="Ensembl" id="ENST00000323319.7">
    <property type="protein sequence ID" value="ENSP00000318113.5"/>
    <property type="gene ID" value="ENSG00000177300.7"/>
</dbReference>
<dbReference type="GeneID" id="53842"/>
<dbReference type="KEGG" id="hsa:53842"/>
<dbReference type="MANE-Select" id="ENST00000323319.7">
    <property type="protein sequence ID" value="ENSP00000318113.5"/>
    <property type="RefSeq nucleotide sequence ID" value="NM_001111319.3"/>
    <property type="RefSeq protein sequence ID" value="NP_001104789.1"/>
</dbReference>
<dbReference type="UCSC" id="uc010isa.2">
    <property type="organism name" value="human"/>
</dbReference>
<dbReference type="AGR" id="HGNC:2044"/>
<dbReference type="CTD" id="53842"/>
<dbReference type="DisGeNET" id="53842"/>
<dbReference type="GeneCards" id="CLDN22"/>
<dbReference type="HGNC" id="HGNC:2044">
    <property type="gene designation" value="CLDN22"/>
</dbReference>
<dbReference type="HPA" id="ENSG00000177300">
    <property type="expression patterns" value="Tissue enriched (salivary)"/>
</dbReference>
<dbReference type="MIM" id="620566">
    <property type="type" value="gene"/>
</dbReference>
<dbReference type="neXtProt" id="NX_Q8N7P3"/>
<dbReference type="OpenTargets" id="ENSG00000177300"/>
<dbReference type="PharmGKB" id="PA26570"/>
<dbReference type="VEuPathDB" id="HostDB:ENSG00000177300"/>
<dbReference type="eggNOG" id="ENOG502RSH3">
    <property type="taxonomic scope" value="Eukaryota"/>
</dbReference>
<dbReference type="GeneTree" id="ENSGT00940000162234"/>
<dbReference type="HOGENOM" id="CLU_076370_1_2_1"/>
<dbReference type="InParanoid" id="Q8N7P3"/>
<dbReference type="OMA" id="WDEGFPD"/>
<dbReference type="OrthoDB" id="8612291at2759"/>
<dbReference type="PAN-GO" id="Q8N7P3">
    <property type="GO annotations" value="4 GO annotations based on evolutionary models"/>
</dbReference>
<dbReference type="PhylomeDB" id="Q8N7P3"/>
<dbReference type="TreeFam" id="TF331936"/>
<dbReference type="PathwayCommons" id="Q8N7P3"/>
<dbReference type="Reactome" id="R-HSA-420029">
    <property type="pathway name" value="Tight junction interactions"/>
</dbReference>
<dbReference type="SignaLink" id="Q8N7P3"/>
<dbReference type="BioGRID-ORCS" id="53842">
    <property type="hits" value="17 hits in 1048 CRISPR screens"/>
</dbReference>
<dbReference type="GeneWiki" id="CLDN22"/>
<dbReference type="GenomeRNAi" id="53842"/>
<dbReference type="Pharos" id="Q8N7P3">
    <property type="development level" value="Tdark"/>
</dbReference>
<dbReference type="PRO" id="PR:Q8N7P3"/>
<dbReference type="Proteomes" id="UP000005640">
    <property type="component" value="Chromosome 4"/>
</dbReference>
<dbReference type="RNAct" id="Q8N7P3">
    <property type="molecule type" value="protein"/>
</dbReference>
<dbReference type="Bgee" id="ENSG00000177300">
    <property type="expression patterns" value="Expressed in male germ line stem cell (sensu Vertebrata) in testis and 78 other cell types or tissues"/>
</dbReference>
<dbReference type="GO" id="GO:0005923">
    <property type="term" value="C:bicellular tight junction"/>
    <property type="evidence" value="ECO:0000250"/>
    <property type="project" value="UniProtKB"/>
</dbReference>
<dbReference type="GO" id="GO:0005886">
    <property type="term" value="C:plasma membrane"/>
    <property type="evidence" value="ECO:0000318"/>
    <property type="project" value="GO_Central"/>
</dbReference>
<dbReference type="GO" id="GO:0042802">
    <property type="term" value="F:identical protein binding"/>
    <property type="evidence" value="ECO:0000250"/>
    <property type="project" value="UniProtKB"/>
</dbReference>
<dbReference type="GO" id="GO:0005198">
    <property type="term" value="F:structural molecule activity"/>
    <property type="evidence" value="ECO:0007669"/>
    <property type="project" value="InterPro"/>
</dbReference>
<dbReference type="GO" id="GO:0070830">
    <property type="term" value="P:bicellular tight junction assembly"/>
    <property type="evidence" value="ECO:0000318"/>
    <property type="project" value="GO_Central"/>
</dbReference>
<dbReference type="GO" id="GO:0016338">
    <property type="term" value="P:calcium-independent cell-cell adhesion via plasma membrane cell-adhesion molecules"/>
    <property type="evidence" value="ECO:0000250"/>
    <property type="project" value="UniProtKB"/>
</dbReference>
<dbReference type="GO" id="GO:0007155">
    <property type="term" value="P:cell adhesion"/>
    <property type="evidence" value="ECO:0000318"/>
    <property type="project" value="GO_Central"/>
</dbReference>
<dbReference type="FunFam" id="1.20.140.150:FF:000001">
    <property type="entry name" value="Claudin"/>
    <property type="match status" value="1"/>
</dbReference>
<dbReference type="Gene3D" id="1.20.140.150">
    <property type="match status" value="1"/>
</dbReference>
<dbReference type="InterPro" id="IPR006187">
    <property type="entry name" value="Claudin"/>
</dbReference>
<dbReference type="InterPro" id="IPR017974">
    <property type="entry name" value="Claudin_CS"/>
</dbReference>
<dbReference type="InterPro" id="IPR004031">
    <property type="entry name" value="PMP22/EMP/MP20/Claudin"/>
</dbReference>
<dbReference type="PANTHER" id="PTHR12002">
    <property type="entry name" value="CLAUDIN"/>
    <property type="match status" value="1"/>
</dbReference>
<dbReference type="Pfam" id="PF00822">
    <property type="entry name" value="PMP22_Claudin"/>
    <property type="match status" value="1"/>
</dbReference>
<dbReference type="PRINTS" id="PR01077">
    <property type="entry name" value="CLAUDIN"/>
</dbReference>
<dbReference type="PROSITE" id="PS01346">
    <property type="entry name" value="CLAUDIN"/>
    <property type="match status" value="1"/>
</dbReference>
<keyword id="KW-0965">Cell junction</keyword>
<keyword id="KW-1003">Cell membrane</keyword>
<keyword id="KW-0472">Membrane</keyword>
<keyword id="KW-1185">Reference proteome</keyword>
<keyword id="KW-0796">Tight junction</keyword>
<keyword id="KW-0812">Transmembrane</keyword>
<keyword id="KW-1133">Transmembrane helix</keyword>
<sequence>MALVFRTVAQLAGVSLSLLGWVLSCLTNYLPHWKNLNLDLNEMENWTMGLWQTCVIQEEVGMQCKDFDSFLALPAELRVSRILMFLSNGLGFLGLLVSGFGLDCLRIGESQRDLKRRLLILGGILSWASGVTALVPVSWVAHKTVQEFWDENVPDFVPRWEFGEALFLGWFAGLSLLLGGCLLHCAACSSHAPLASGHYAVAQTQDHHQELETRNTNLKH</sequence>
<name>CLD22_HUMAN</name>
<protein>
    <recommendedName>
        <fullName>Claudin-22</fullName>
    </recommendedName>
</protein>
<accession>Q8N7P3</accession>
<comment type="function">
    <text evidence="1">Plays a major role in tight junction-specific obliteration of the intercellular space, through calcium-independent cell-adhesion activity.</text>
</comment>
<comment type="interaction">
    <interactant intactId="EBI-17766761">
        <id>Q8N7P3</id>
    </interactant>
    <interactant intactId="EBI-12913226">
        <id>Q8WTT0</id>
        <label>CLEC4C</label>
    </interactant>
    <organismsDiffer>false</organismsDiffer>
    <experiments>3</experiments>
</comment>
<comment type="interaction">
    <interactant intactId="EBI-17766761">
        <id>Q8N7P3</id>
    </interactant>
    <interactant intactId="EBI-2835281">
        <id>P25025</id>
        <label>CXCR2</label>
    </interactant>
    <organismsDiffer>false</organismsDiffer>
    <experiments>3</experiments>
</comment>
<comment type="interaction">
    <interactant intactId="EBI-17766761">
        <id>Q8N7P3</id>
    </interactant>
    <interactant intactId="EBI-2820517">
        <id>Q8TAF8</id>
        <label>LHFPL5</label>
    </interactant>
    <organismsDiffer>false</organismsDiffer>
    <experiments>3</experiments>
</comment>
<comment type="interaction">
    <interactant intactId="EBI-17766761">
        <id>Q8N7P3</id>
    </interactant>
    <interactant intactId="EBI-12807478">
        <id>P35372-10</id>
        <label>OPRM1</label>
    </interactant>
    <organismsDiffer>false</organismsDiffer>
    <experiments>3</experiments>
</comment>
<comment type="interaction">
    <interactant intactId="EBI-17766761">
        <id>Q8N7P3</id>
    </interactant>
    <interactant intactId="EBI-742688">
        <id>Q9NZD8</id>
        <label>SPG21</label>
    </interactant>
    <organismsDiffer>false</organismsDiffer>
    <experiments>3</experiments>
</comment>
<comment type="interaction">
    <interactant intactId="EBI-17766761">
        <id>Q8N7P3</id>
    </interactant>
    <interactant intactId="EBI-1045825">
        <id>P55061</id>
        <label>TMBIM6</label>
    </interactant>
    <organismsDiffer>false</organismsDiffer>
    <experiments>3</experiments>
</comment>
<comment type="interaction">
    <interactant intactId="EBI-17766761">
        <id>Q8N7P3</id>
    </interactant>
    <interactant intactId="EBI-16746122">
        <id>Q9NSU2-1</id>
        <label>TREX1</label>
    </interactant>
    <organismsDiffer>false</organismsDiffer>
    <experiments>3</experiments>
</comment>
<comment type="subcellular location">
    <subcellularLocation>
        <location evidence="1">Cell junction</location>
        <location evidence="1">Tight junction</location>
    </subcellularLocation>
    <subcellularLocation>
        <location evidence="1">Cell membrane</location>
        <topology evidence="1">Multi-pass membrane protein</topology>
    </subcellularLocation>
</comment>
<comment type="similarity">
    <text evidence="3">Belongs to the claudin family.</text>
</comment>
<reference key="1">
    <citation type="journal article" date="2005" name="Nature">
        <title>Generation and annotation of the DNA sequences of human chromosomes 2 and 4.</title>
        <authorList>
            <person name="Hillier L.W."/>
            <person name="Graves T.A."/>
            <person name="Fulton R.S."/>
            <person name="Fulton L.A."/>
            <person name="Pepin K.H."/>
            <person name="Minx P."/>
            <person name="Wagner-McPherson C."/>
            <person name="Layman D."/>
            <person name="Wylie K."/>
            <person name="Sekhon M."/>
            <person name="Becker M.C."/>
            <person name="Fewell G.A."/>
            <person name="Delehaunty K.D."/>
            <person name="Miner T.L."/>
            <person name="Nash W.E."/>
            <person name="Kremitzki C."/>
            <person name="Oddy L."/>
            <person name="Du H."/>
            <person name="Sun H."/>
            <person name="Bradshaw-Cordum H."/>
            <person name="Ali J."/>
            <person name="Carter J."/>
            <person name="Cordes M."/>
            <person name="Harris A."/>
            <person name="Isak A."/>
            <person name="van Brunt A."/>
            <person name="Nguyen C."/>
            <person name="Du F."/>
            <person name="Courtney L."/>
            <person name="Kalicki J."/>
            <person name="Ozersky P."/>
            <person name="Abbott S."/>
            <person name="Armstrong J."/>
            <person name="Belter E.A."/>
            <person name="Caruso L."/>
            <person name="Cedroni M."/>
            <person name="Cotton M."/>
            <person name="Davidson T."/>
            <person name="Desai A."/>
            <person name="Elliott G."/>
            <person name="Erb T."/>
            <person name="Fronick C."/>
            <person name="Gaige T."/>
            <person name="Haakenson W."/>
            <person name="Haglund K."/>
            <person name="Holmes A."/>
            <person name="Harkins R."/>
            <person name="Kim K."/>
            <person name="Kruchowski S.S."/>
            <person name="Strong C.M."/>
            <person name="Grewal N."/>
            <person name="Goyea E."/>
            <person name="Hou S."/>
            <person name="Levy A."/>
            <person name="Martinka S."/>
            <person name="Mead K."/>
            <person name="McLellan M.D."/>
            <person name="Meyer R."/>
            <person name="Randall-Maher J."/>
            <person name="Tomlinson C."/>
            <person name="Dauphin-Kohlberg S."/>
            <person name="Kozlowicz-Reilly A."/>
            <person name="Shah N."/>
            <person name="Swearengen-Shahid S."/>
            <person name="Snider J."/>
            <person name="Strong J.T."/>
            <person name="Thompson J."/>
            <person name="Yoakum M."/>
            <person name="Leonard S."/>
            <person name="Pearman C."/>
            <person name="Trani L."/>
            <person name="Radionenko M."/>
            <person name="Waligorski J.E."/>
            <person name="Wang C."/>
            <person name="Rock S.M."/>
            <person name="Tin-Wollam A.-M."/>
            <person name="Maupin R."/>
            <person name="Latreille P."/>
            <person name="Wendl M.C."/>
            <person name="Yang S.-P."/>
            <person name="Pohl C."/>
            <person name="Wallis J.W."/>
            <person name="Spieth J."/>
            <person name="Bieri T.A."/>
            <person name="Berkowicz N."/>
            <person name="Nelson J.O."/>
            <person name="Osborne J."/>
            <person name="Ding L."/>
            <person name="Meyer R."/>
            <person name="Sabo A."/>
            <person name="Shotland Y."/>
            <person name="Sinha P."/>
            <person name="Wohldmann P.E."/>
            <person name="Cook L.L."/>
            <person name="Hickenbotham M.T."/>
            <person name="Eldred J."/>
            <person name="Williams D."/>
            <person name="Jones T.A."/>
            <person name="She X."/>
            <person name="Ciccarelli F.D."/>
            <person name="Izaurralde E."/>
            <person name="Taylor J."/>
            <person name="Schmutz J."/>
            <person name="Myers R.M."/>
            <person name="Cox D.R."/>
            <person name="Huang X."/>
            <person name="McPherson J.D."/>
            <person name="Mardis E.R."/>
            <person name="Clifton S.W."/>
            <person name="Warren W.C."/>
            <person name="Chinwalla A.T."/>
            <person name="Eddy S.R."/>
            <person name="Marra M.A."/>
            <person name="Ovcharenko I."/>
            <person name="Furey T.S."/>
            <person name="Miller W."/>
            <person name="Eichler E.E."/>
            <person name="Bork P."/>
            <person name="Suyama M."/>
            <person name="Torrents D."/>
            <person name="Waterston R.H."/>
            <person name="Wilson R.K."/>
        </authorList>
    </citation>
    <scope>NUCLEOTIDE SEQUENCE [LARGE SCALE GENOMIC DNA]</scope>
</reference>
<reference key="2">
    <citation type="journal article" date="2004" name="Nat. Genet.">
        <title>Complete sequencing and characterization of 21,243 full-length human cDNAs.</title>
        <authorList>
            <person name="Ota T."/>
            <person name="Suzuki Y."/>
            <person name="Nishikawa T."/>
            <person name="Otsuki T."/>
            <person name="Sugiyama T."/>
            <person name="Irie R."/>
            <person name="Wakamatsu A."/>
            <person name="Hayashi K."/>
            <person name="Sato H."/>
            <person name="Nagai K."/>
            <person name="Kimura K."/>
            <person name="Makita H."/>
            <person name="Sekine M."/>
            <person name="Obayashi M."/>
            <person name="Nishi T."/>
            <person name="Shibahara T."/>
            <person name="Tanaka T."/>
            <person name="Ishii S."/>
            <person name="Yamamoto J."/>
            <person name="Saito K."/>
            <person name="Kawai Y."/>
            <person name="Isono Y."/>
            <person name="Nakamura Y."/>
            <person name="Nagahari K."/>
            <person name="Murakami K."/>
            <person name="Yasuda T."/>
            <person name="Iwayanagi T."/>
            <person name="Wagatsuma M."/>
            <person name="Shiratori A."/>
            <person name="Sudo H."/>
            <person name="Hosoiri T."/>
            <person name="Kaku Y."/>
            <person name="Kodaira H."/>
            <person name="Kondo H."/>
            <person name="Sugawara M."/>
            <person name="Takahashi M."/>
            <person name="Kanda K."/>
            <person name="Yokoi T."/>
            <person name="Furuya T."/>
            <person name="Kikkawa E."/>
            <person name="Omura Y."/>
            <person name="Abe K."/>
            <person name="Kamihara K."/>
            <person name="Katsuta N."/>
            <person name="Sato K."/>
            <person name="Tanikawa M."/>
            <person name="Yamazaki M."/>
            <person name="Ninomiya K."/>
            <person name="Ishibashi T."/>
            <person name="Yamashita H."/>
            <person name="Murakawa K."/>
            <person name="Fujimori K."/>
            <person name="Tanai H."/>
            <person name="Kimata M."/>
            <person name="Watanabe M."/>
            <person name="Hiraoka S."/>
            <person name="Chiba Y."/>
            <person name="Ishida S."/>
            <person name="Ono Y."/>
            <person name="Takiguchi S."/>
            <person name="Watanabe S."/>
            <person name="Yosida M."/>
            <person name="Hotuta T."/>
            <person name="Kusano J."/>
            <person name="Kanehori K."/>
            <person name="Takahashi-Fujii A."/>
            <person name="Hara H."/>
            <person name="Tanase T.-O."/>
            <person name="Nomura Y."/>
            <person name="Togiya S."/>
            <person name="Komai F."/>
            <person name="Hara R."/>
            <person name="Takeuchi K."/>
            <person name="Arita M."/>
            <person name="Imose N."/>
            <person name="Musashino K."/>
            <person name="Yuuki H."/>
            <person name="Oshima A."/>
            <person name="Sasaki N."/>
            <person name="Aotsuka S."/>
            <person name="Yoshikawa Y."/>
            <person name="Matsunawa H."/>
            <person name="Ichihara T."/>
            <person name="Shiohata N."/>
            <person name="Sano S."/>
            <person name="Moriya S."/>
            <person name="Momiyama H."/>
            <person name="Satoh N."/>
            <person name="Takami S."/>
            <person name="Terashima Y."/>
            <person name="Suzuki O."/>
            <person name="Nakagawa S."/>
            <person name="Senoh A."/>
            <person name="Mizoguchi H."/>
            <person name="Goto Y."/>
            <person name="Shimizu F."/>
            <person name="Wakebe H."/>
            <person name="Hishigaki H."/>
            <person name="Watanabe T."/>
            <person name="Sugiyama A."/>
            <person name="Takemoto M."/>
            <person name="Kawakami B."/>
            <person name="Yamazaki M."/>
            <person name="Watanabe K."/>
            <person name="Kumagai A."/>
            <person name="Itakura S."/>
            <person name="Fukuzumi Y."/>
            <person name="Fujimori Y."/>
            <person name="Komiyama M."/>
            <person name="Tashiro H."/>
            <person name="Tanigami A."/>
            <person name="Fujiwara T."/>
            <person name="Ono T."/>
            <person name="Yamada K."/>
            <person name="Fujii Y."/>
            <person name="Ozaki K."/>
            <person name="Hirao M."/>
            <person name="Ohmori Y."/>
            <person name="Kawabata A."/>
            <person name="Hikiji T."/>
            <person name="Kobatake N."/>
            <person name="Inagaki H."/>
            <person name="Ikema Y."/>
            <person name="Okamoto S."/>
            <person name="Okitani R."/>
            <person name="Kawakami T."/>
            <person name="Noguchi S."/>
            <person name="Itoh T."/>
            <person name="Shigeta K."/>
            <person name="Senba T."/>
            <person name="Matsumura K."/>
            <person name="Nakajima Y."/>
            <person name="Mizuno T."/>
            <person name="Morinaga M."/>
            <person name="Sasaki M."/>
            <person name="Togashi T."/>
            <person name="Oyama M."/>
            <person name="Hata H."/>
            <person name="Watanabe M."/>
            <person name="Komatsu T."/>
            <person name="Mizushima-Sugano J."/>
            <person name="Satoh T."/>
            <person name="Shirai Y."/>
            <person name="Takahashi Y."/>
            <person name="Nakagawa K."/>
            <person name="Okumura K."/>
            <person name="Nagase T."/>
            <person name="Nomura N."/>
            <person name="Kikuchi H."/>
            <person name="Masuho Y."/>
            <person name="Yamashita R."/>
            <person name="Nakai K."/>
            <person name="Yada T."/>
            <person name="Nakamura Y."/>
            <person name="Ohara O."/>
            <person name="Isogai T."/>
            <person name="Sugano S."/>
        </authorList>
    </citation>
    <scope>NUCLEOTIDE SEQUENCE [LARGE SCALE MRNA] OF 18-220</scope>
    <source>
        <tissue>Trachea</tissue>
    </source>
</reference>
<proteinExistence type="evidence at protein level"/>
<feature type="chain" id="PRO_0000144785" description="Claudin-22">
    <location>
        <begin position="1"/>
        <end position="220"/>
    </location>
</feature>
<feature type="topological domain" description="Cytoplasmic" evidence="2">
    <location>
        <begin position="1"/>
        <end position="10"/>
    </location>
</feature>
<feature type="transmembrane region" description="Helical" evidence="2">
    <location>
        <begin position="11"/>
        <end position="30"/>
    </location>
</feature>
<feature type="topological domain" description="Extracellular" evidence="2">
    <location>
        <begin position="31"/>
        <end position="81"/>
    </location>
</feature>
<feature type="transmembrane region" description="Helical" evidence="2">
    <location>
        <begin position="82"/>
        <end position="102"/>
    </location>
</feature>
<feature type="topological domain" description="Cytoplasmic" evidence="2">
    <location>
        <begin position="103"/>
        <end position="117"/>
    </location>
</feature>
<feature type="transmembrane region" description="Helical" evidence="2">
    <location>
        <begin position="118"/>
        <end position="138"/>
    </location>
</feature>
<feature type="topological domain" description="Extracellular" evidence="2">
    <location>
        <begin position="139"/>
        <end position="164"/>
    </location>
</feature>
<feature type="transmembrane region" description="Helical" evidence="2">
    <location>
        <begin position="165"/>
        <end position="185"/>
    </location>
</feature>
<feature type="topological domain" description="Cytoplasmic" evidence="2">
    <location>
        <begin position="186"/>
        <end position="220"/>
    </location>
</feature>
<feature type="sequence conflict" description="In Ref. 2; AK098064." evidence="3" ref="2">
    <original>Q</original>
    <variation>L</variation>
    <location>
        <position position="111"/>
    </location>
</feature>
<evidence type="ECO:0000250" key="1"/>
<evidence type="ECO:0000255" key="2"/>
<evidence type="ECO:0000305" key="3"/>